<evidence type="ECO:0000255" key="1">
    <source>
        <dbReference type="HAMAP-Rule" id="MF_01371"/>
    </source>
</evidence>
<evidence type="ECO:0000305" key="2"/>
<dbReference type="EMBL" id="CP000853">
    <property type="protein sequence ID" value="ABW18072.1"/>
    <property type="molecule type" value="Genomic_DNA"/>
</dbReference>
<dbReference type="RefSeq" id="WP_012158386.1">
    <property type="nucleotide sequence ID" value="NC_009922.1"/>
</dbReference>
<dbReference type="SMR" id="A8MLF8"/>
<dbReference type="STRING" id="350688.Clos_0510"/>
<dbReference type="KEGG" id="aoe:Clos_0510"/>
<dbReference type="eggNOG" id="COG1841">
    <property type="taxonomic scope" value="Bacteria"/>
</dbReference>
<dbReference type="HOGENOM" id="CLU_131047_2_1_9"/>
<dbReference type="OrthoDB" id="9812790at2"/>
<dbReference type="Proteomes" id="UP000000269">
    <property type="component" value="Chromosome"/>
</dbReference>
<dbReference type="GO" id="GO:0022625">
    <property type="term" value="C:cytosolic large ribosomal subunit"/>
    <property type="evidence" value="ECO:0007669"/>
    <property type="project" value="TreeGrafter"/>
</dbReference>
<dbReference type="GO" id="GO:0003735">
    <property type="term" value="F:structural constituent of ribosome"/>
    <property type="evidence" value="ECO:0007669"/>
    <property type="project" value="InterPro"/>
</dbReference>
<dbReference type="GO" id="GO:0006412">
    <property type="term" value="P:translation"/>
    <property type="evidence" value="ECO:0007669"/>
    <property type="project" value="UniProtKB-UniRule"/>
</dbReference>
<dbReference type="CDD" id="cd01658">
    <property type="entry name" value="Ribosomal_L30"/>
    <property type="match status" value="1"/>
</dbReference>
<dbReference type="FunFam" id="3.30.1390.20:FF:000001">
    <property type="entry name" value="50S ribosomal protein L30"/>
    <property type="match status" value="1"/>
</dbReference>
<dbReference type="Gene3D" id="3.30.1390.20">
    <property type="entry name" value="Ribosomal protein L30, ferredoxin-like fold domain"/>
    <property type="match status" value="1"/>
</dbReference>
<dbReference type="HAMAP" id="MF_01371_B">
    <property type="entry name" value="Ribosomal_uL30_B"/>
    <property type="match status" value="1"/>
</dbReference>
<dbReference type="InterPro" id="IPR036919">
    <property type="entry name" value="Ribo_uL30_ferredoxin-like_sf"/>
</dbReference>
<dbReference type="InterPro" id="IPR005996">
    <property type="entry name" value="Ribosomal_uL30_bac-type"/>
</dbReference>
<dbReference type="InterPro" id="IPR018038">
    <property type="entry name" value="Ribosomal_uL30_CS"/>
</dbReference>
<dbReference type="InterPro" id="IPR016082">
    <property type="entry name" value="Ribosomal_uL30_ferredoxin-like"/>
</dbReference>
<dbReference type="NCBIfam" id="TIGR01308">
    <property type="entry name" value="rpmD_bact"/>
    <property type="match status" value="1"/>
</dbReference>
<dbReference type="PANTHER" id="PTHR15892:SF2">
    <property type="entry name" value="LARGE RIBOSOMAL SUBUNIT PROTEIN UL30M"/>
    <property type="match status" value="1"/>
</dbReference>
<dbReference type="PANTHER" id="PTHR15892">
    <property type="entry name" value="MITOCHONDRIAL RIBOSOMAL PROTEIN L30"/>
    <property type="match status" value="1"/>
</dbReference>
<dbReference type="Pfam" id="PF00327">
    <property type="entry name" value="Ribosomal_L30"/>
    <property type="match status" value="1"/>
</dbReference>
<dbReference type="PIRSF" id="PIRSF002211">
    <property type="entry name" value="Ribosomal_L30_bac-type"/>
    <property type="match status" value="1"/>
</dbReference>
<dbReference type="SUPFAM" id="SSF55129">
    <property type="entry name" value="Ribosomal protein L30p/L7e"/>
    <property type="match status" value="1"/>
</dbReference>
<dbReference type="PROSITE" id="PS00634">
    <property type="entry name" value="RIBOSOMAL_L30"/>
    <property type="match status" value="1"/>
</dbReference>
<organism>
    <name type="scientific">Alkaliphilus oremlandii (strain OhILAs)</name>
    <name type="common">Clostridium oremlandii (strain OhILAs)</name>
    <dbReference type="NCBI Taxonomy" id="350688"/>
    <lineage>
        <taxon>Bacteria</taxon>
        <taxon>Bacillati</taxon>
        <taxon>Bacillota</taxon>
        <taxon>Clostridia</taxon>
        <taxon>Peptostreptococcales</taxon>
        <taxon>Natronincolaceae</taxon>
        <taxon>Alkaliphilus</taxon>
    </lineage>
</organism>
<keyword id="KW-1185">Reference proteome</keyword>
<keyword id="KW-0687">Ribonucleoprotein</keyword>
<keyword id="KW-0689">Ribosomal protein</keyword>
<comment type="subunit">
    <text evidence="1">Part of the 50S ribosomal subunit.</text>
</comment>
<comment type="similarity">
    <text evidence="1">Belongs to the universal ribosomal protein uL30 family.</text>
</comment>
<gene>
    <name evidence="1" type="primary">rpmD</name>
    <name type="ordered locus">Clos_0510</name>
</gene>
<proteinExistence type="inferred from homology"/>
<sequence length="59" mass="6571">MAKVSIKLTKSVIGTKPNQRKTVEALGLKKIGQVTEKEMTPQLRGMIDVVQHLVEVKEI</sequence>
<reference key="1">
    <citation type="submission" date="2007-10" db="EMBL/GenBank/DDBJ databases">
        <title>Complete genome of Alkaliphilus oremlandii OhILAs.</title>
        <authorList>
            <person name="Copeland A."/>
            <person name="Lucas S."/>
            <person name="Lapidus A."/>
            <person name="Barry K."/>
            <person name="Detter J.C."/>
            <person name="Glavina del Rio T."/>
            <person name="Hammon N."/>
            <person name="Israni S."/>
            <person name="Dalin E."/>
            <person name="Tice H."/>
            <person name="Pitluck S."/>
            <person name="Chain P."/>
            <person name="Malfatti S."/>
            <person name="Shin M."/>
            <person name="Vergez L."/>
            <person name="Schmutz J."/>
            <person name="Larimer F."/>
            <person name="Land M."/>
            <person name="Hauser L."/>
            <person name="Kyrpides N."/>
            <person name="Mikhailova N."/>
            <person name="Stolz J.F."/>
            <person name="Dawson A."/>
            <person name="Fisher E."/>
            <person name="Crable B."/>
            <person name="Perera E."/>
            <person name="Lisak J."/>
            <person name="Ranganathan M."/>
            <person name="Basu P."/>
            <person name="Richardson P."/>
        </authorList>
    </citation>
    <scope>NUCLEOTIDE SEQUENCE [LARGE SCALE GENOMIC DNA]</scope>
    <source>
        <strain>OhILAs</strain>
    </source>
</reference>
<accession>A8MLF8</accession>
<protein>
    <recommendedName>
        <fullName evidence="1">Large ribosomal subunit protein uL30</fullName>
    </recommendedName>
    <alternativeName>
        <fullName evidence="2">50S ribosomal protein L30</fullName>
    </alternativeName>
</protein>
<feature type="chain" id="PRO_1000068192" description="Large ribosomal subunit protein uL30">
    <location>
        <begin position="1"/>
        <end position="59"/>
    </location>
</feature>
<name>RL30_ALKOO</name>